<dbReference type="EC" id="3.6.4.-" evidence="1"/>
<dbReference type="EMBL" id="U11697">
    <property type="protein sequence ID" value="AAA19858.1"/>
    <property type="molecule type" value="mRNA"/>
</dbReference>
<dbReference type="SMR" id="P53502"/>
<dbReference type="GO" id="GO:0005737">
    <property type="term" value="C:cytoplasm"/>
    <property type="evidence" value="ECO:0007669"/>
    <property type="project" value="UniProtKB-KW"/>
</dbReference>
<dbReference type="GO" id="GO:0005856">
    <property type="term" value="C:cytoskeleton"/>
    <property type="evidence" value="ECO:0007669"/>
    <property type="project" value="UniProtKB-SubCell"/>
</dbReference>
<dbReference type="GO" id="GO:0005524">
    <property type="term" value="F:ATP binding"/>
    <property type="evidence" value="ECO:0007669"/>
    <property type="project" value="UniProtKB-KW"/>
</dbReference>
<dbReference type="GO" id="GO:0016787">
    <property type="term" value="F:hydrolase activity"/>
    <property type="evidence" value="ECO:0007669"/>
    <property type="project" value="UniProtKB-KW"/>
</dbReference>
<dbReference type="CDD" id="cd10224">
    <property type="entry name" value="ASKHA_NBD_actin"/>
    <property type="match status" value="1"/>
</dbReference>
<dbReference type="FunFam" id="2.30.36.70:FF:000001">
    <property type="entry name" value="Actin, alpha skeletal muscle"/>
    <property type="match status" value="1"/>
</dbReference>
<dbReference type="FunFam" id="3.30.420.40:FF:000291">
    <property type="entry name" value="Actin, alpha skeletal muscle"/>
    <property type="match status" value="1"/>
</dbReference>
<dbReference type="FunFam" id="3.90.640.10:FF:000047">
    <property type="entry name" value="Actin, alpha skeletal muscle"/>
    <property type="match status" value="1"/>
</dbReference>
<dbReference type="FunFam" id="3.30.420.40:FF:000404">
    <property type="entry name" value="Major actin"/>
    <property type="match status" value="1"/>
</dbReference>
<dbReference type="FunFam" id="3.30.420.40:FF:000058">
    <property type="entry name" value="Putative actin-related protein 5"/>
    <property type="match status" value="1"/>
</dbReference>
<dbReference type="Gene3D" id="3.30.420.40">
    <property type="match status" value="2"/>
</dbReference>
<dbReference type="Gene3D" id="3.90.640.10">
    <property type="entry name" value="Actin, Chain A, domain 4"/>
    <property type="match status" value="1"/>
</dbReference>
<dbReference type="InterPro" id="IPR004000">
    <property type="entry name" value="Actin"/>
</dbReference>
<dbReference type="InterPro" id="IPR004001">
    <property type="entry name" value="Actin_CS"/>
</dbReference>
<dbReference type="InterPro" id="IPR043129">
    <property type="entry name" value="ATPase_NBD"/>
</dbReference>
<dbReference type="PANTHER" id="PTHR11937">
    <property type="entry name" value="ACTIN"/>
    <property type="match status" value="1"/>
</dbReference>
<dbReference type="Pfam" id="PF00022">
    <property type="entry name" value="Actin"/>
    <property type="match status" value="1"/>
</dbReference>
<dbReference type="PRINTS" id="PR00190">
    <property type="entry name" value="ACTIN"/>
</dbReference>
<dbReference type="SMART" id="SM00268">
    <property type="entry name" value="ACTIN"/>
    <property type="match status" value="1"/>
</dbReference>
<dbReference type="SUPFAM" id="SSF53067">
    <property type="entry name" value="Actin-like ATPase domain"/>
    <property type="match status" value="2"/>
</dbReference>
<dbReference type="PROSITE" id="PS00406">
    <property type="entry name" value="ACTINS_1"/>
    <property type="match status" value="1"/>
</dbReference>
<dbReference type="PROSITE" id="PS00432">
    <property type="entry name" value="ACTINS_2"/>
    <property type="match status" value="1"/>
</dbReference>
<comment type="function">
    <text>Actins are highly conserved proteins that are involved in various types of cell motility and are ubiquitously expressed in all eukaryotic cells.</text>
</comment>
<comment type="function">
    <text>Essential component of cell cytoskeleton; plays an important role in cytoplasmic streaming, cell shape determination, cell division, organelle movement and extension growth.</text>
</comment>
<comment type="catalytic activity">
    <reaction evidence="1">
        <text>ATP + H2O = ADP + phosphate + H(+)</text>
        <dbReference type="Rhea" id="RHEA:13065"/>
        <dbReference type="ChEBI" id="CHEBI:15377"/>
        <dbReference type="ChEBI" id="CHEBI:15378"/>
        <dbReference type="ChEBI" id="CHEBI:30616"/>
        <dbReference type="ChEBI" id="CHEBI:43474"/>
        <dbReference type="ChEBI" id="CHEBI:456216"/>
    </reaction>
</comment>
<comment type="subcellular location">
    <subcellularLocation>
        <location>Cytoplasm</location>
        <location>Cytoskeleton</location>
    </subcellularLocation>
</comment>
<comment type="similarity">
    <text evidence="2">Belongs to the actin family.</text>
</comment>
<reference key="1">
    <citation type="journal article" date="1995" name="Plant Physiol.">
        <title>Sequence of actin cDNA from Fucus disticus.</title>
        <authorList>
            <person name="Goodner B.W."/>
            <person name="Davis J.D."/>
            <person name="Quatrano R.S."/>
        </authorList>
    </citation>
    <scope>NUCLEOTIDE SEQUENCE [MRNA]</scope>
</reference>
<accession>P53502</accession>
<name>ACT_FUCDI</name>
<keyword id="KW-0067">ATP-binding</keyword>
<keyword id="KW-0963">Cytoplasm</keyword>
<keyword id="KW-0206">Cytoskeleton</keyword>
<keyword id="KW-0378">Hydrolase</keyword>
<keyword id="KW-0547">Nucleotide-binding</keyword>
<feature type="chain" id="PRO_0000088941" description="Actin">
    <location>
        <begin position="1"/>
        <end position="375"/>
    </location>
</feature>
<proteinExistence type="evidence at transcript level"/>
<protein>
    <recommendedName>
        <fullName>Actin</fullName>
        <ecNumber evidence="1">3.6.4.-</ecNumber>
    </recommendedName>
</protein>
<evidence type="ECO:0000250" key="1">
    <source>
        <dbReference type="UniProtKB" id="P68137"/>
    </source>
</evidence>
<evidence type="ECO:0000305" key="2"/>
<organism>
    <name type="scientific">Fucus distichus</name>
    <name type="common">Common rockweed</name>
    <name type="synonym">Brown alga</name>
    <dbReference type="NCBI Taxonomy" id="3012"/>
    <lineage>
        <taxon>Eukaryota</taxon>
        <taxon>Sar</taxon>
        <taxon>Stramenopiles</taxon>
        <taxon>Ochrophyta</taxon>
        <taxon>PX clade</taxon>
        <taxon>Phaeophyceae</taxon>
        <taxon>Fucales</taxon>
        <taxon>Fucaceae</taxon>
        <taxon>Fucus</taxon>
    </lineage>
</organism>
<sequence length="375" mass="41794">MADEDVQALVVDNGSGMCKAGFGDDAPRAVFPSIVGRPKHPGIMVGMDQKDAYVGDEAQSKRGVLTLKYPIEHGIVTNWDDMEKIWHHTFYNELRVAPEEHPVLLTEVPLNPKANKERMTQIMFETFNVLAMYVNIQAVLSLYASGSTTGCVLDSGDGVSHTVPIYEGYALPHAINRLDLAGRDLTDNLMKVLTERGYSFTTTREREIVRDIREKLTYVALDFDQEMKTAGESSQLEKSYELPDGNVIVIGNERFRCPEVLFQPSFIGMESSGIHDCTFKTIMKCDVDIRKDLYGNIVLSGGTTMFPGIGERMTKELTALAPSTMKIKVVAPPERKYSVWIGGSILASLSTFQQMWISKAEYDESGPSIVHRKCF</sequence>